<evidence type="ECO:0000250" key="1"/>
<evidence type="ECO:0000256" key="2">
    <source>
        <dbReference type="SAM" id="MobiDB-lite"/>
    </source>
</evidence>
<evidence type="ECO:0000305" key="3"/>
<feature type="chain" id="PRO_0000304032" description="Shuttling pre-60S factor C23B6.02c">
    <location>
        <begin position="1"/>
        <end position="111"/>
    </location>
</feature>
<feature type="region of interest" description="Disordered" evidence="2">
    <location>
        <begin position="1"/>
        <end position="25"/>
    </location>
</feature>
<feature type="region of interest" description="Disordered" evidence="2">
    <location>
        <begin position="47"/>
        <end position="111"/>
    </location>
</feature>
<feature type="compositionally biased region" description="Basic residues" evidence="2">
    <location>
        <begin position="1"/>
        <end position="12"/>
    </location>
</feature>
<feature type="compositionally biased region" description="Basic residues" evidence="2">
    <location>
        <begin position="59"/>
        <end position="73"/>
    </location>
</feature>
<feature type="compositionally biased region" description="Basic and acidic residues" evidence="2">
    <location>
        <begin position="83"/>
        <end position="111"/>
    </location>
</feature>
<proteinExistence type="inferred from homology"/>
<accession>Q9UUA0</accession>
<keyword id="KW-0963">Cytoplasm</keyword>
<keyword id="KW-0539">Nucleus</keyword>
<keyword id="KW-1185">Reference proteome</keyword>
<keyword id="KW-0690">Ribosome biogenesis</keyword>
<keyword id="KW-0813">Transport</keyword>
<comment type="function">
    <text evidence="1">Pre-ribosomal factor involved in 60S ribosomal protein subunit export from the nucleus.</text>
</comment>
<comment type="subunit">
    <text evidence="1">Associates with the pre-60S ribosomal particle and the nucleopore complex.</text>
</comment>
<comment type="subcellular location">
    <subcellularLocation>
        <location evidence="1">Nucleus</location>
        <location evidence="1">Nucleolus</location>
    </subcellularLocation>
    <subcellularLocation>
        <location evidence="1">Nucleus</location>
    </subcellularLocation>
    <subcellularLocation>
        <location evidence="1">Cytoplasm</location>
    </subcellularLocation>
    <text evidence="1">Shuttles between the nucleus and the cytoplasm.</text>
</comment>
<comment type="similarity">
    <text evidence="3">Belongs to the ECM1 family.</text>
</comment>
<name>ECM1_SCHPO</name>
<protein>
    <recommendedName>
        <fullName>Shuttling pre-60S factor C23B6.02c</fullName>
    </recommendedName>
</protein>
<reference key="1">
    <citation type="journal article" date="2002" name="Nature">
        <title>The genome sequence of Schizosaccharomyces pombe.</title>
        <authorList>
            <person name="Wood V."/>
            <person name="Gwilliam R."/>
            <person name="Rajandream M.A."/>
            <person name="Lyne M.H."/>
            <person name="Lyne R."/>
            <person name="Stewart A."/>
            <person name="Sgouros J.G."/>
            <person name="Peat N."/>
            <person name="Hayles J."/>
            <person name="Baker S.G."/>
            <person name="Basham D."/>
            <person name="Bowman S."/>
            <person name="Brooks K."/>
            <person name="Brown D."/>
            <person name="Brown S."/>
            <person name="Chillingworth T."/>
            <person name="Churcher C.M."/>
            <person name="Collins M."/>
            <person name="Connor R."/>
            <person name="Cronin A."/>
            <person name="Davis P."/>
            <person name="Feltwell T."/>
            <person name="Fraser A."/>
            <person name="Gentles S."/>
            <person name="Goble A."/>
            <person name="Hamlin N."/>
            <person name="Harris D.E."/>
            <person name="Hidalgo J."/>
            <person name="Hodgson G."/>
            <person name="Holroyd S."/>
            <person name="Hornsby T."/>
            <person name="Howarth S."/>
            <person name="Huckle E.J."/>
            <person name="Hunt S."/>
            <person name="Jagels K."/>
            <person name="James K.D."/>
            <person name="Jones L."/>
            <person name="Jones M."/>
            <person name="Leather S."/>
            <person name="McDonald S."/>
            <person name="McLean J."/>
            <person name="Mooney P."/>
            <person name="Moule S."/>
            <person name="Mungall K.L."/>
            <person name="Murphy L.D."/>
            <person name="Niblett D."/>
            <person name="Odell C."/>
            <person name="Oliver K."/>
            <person name="O'Neil S."/>
            <person name="Pearson D."/>
            <person name="Quail M.A."/>
            <person name="Rabbinowitsch E."/>
            <person name="Rutherford K.M."/>
            <person name="Rutter S."/>
            <person name="Saunders D."/>
            <person name="Seeger K."/>
            <person name="Sharp S."/>
            <person name="Skelton J."/>
            <person name="Simmonds M.N."/>
            <person name="Squares R."/>
            <person name="Squares S."/>
            <person name="Stevens K."/>
            <person name="Taylor K."/>
            <person name="Taylor R.G."/>
            <person name="Tivey A."/>
            <person name="Walsh S.V."/>
            <person name="Warren T."/>
            <person name="Whitehead S."/>
            <person name="Woodward J.R."/>
            <person name="Volckaert G."/>
            <person name="Aert R."/>
            <person name="Robben J."/>
            <person name="Grymonprez B."/>
            <person name="Weltjens I."/>
            <person name="Vanstreels E."/>
            <person name="Rieger M."/>
            <person name="Schaefer M."/>
            <person name="Mueller-Auer S."/>
            <person name="Gabel C."/>
            <person name="Fuchs M."/>
            <person name="Duesterhoeft A."/>
            <person name="Fritzc C."/>
            <person name="Holzer E."/>
            <person name="Moestl D."/>
            <person name="Hilbert H."/>
            <person name="Borzym K."/>
            <person name="Langer I."/>
            <person name="Beck A."/>
            <person name="Lehrach H."/>
            <person name="Reinhardt R."/>
            <person name="Pohl T.M."/>
            <person name="Eger P."/>
            <person name="Zimmermann W."/>
            <person name="Wedler H."/>
            <person name="Wambutt R."/>
            <person name="Purnelle B."/>
            <person name="Goffeau A."/>
            <person name="Cadieu E."/>
            <person name="Dreano S."/>
            <person name="Gloux S."/>
            <person name="Lelaure V."/>
            <person name="Mottier S."/>
            <person name="Galibert F."/>
            <person name="Aves S.J."/>
            <person name="Xiang Z."/>
            <person name="Hunt C."/>
            <person name="Moore K."/>
            <person name="Hurst S.M."/>
            <person name="Lucas M."/>
            <person name="Rochet M."/>
            <person name="Gaillardin C."/>
            <person name="Tallada V.A."/>
            <person name="Garzon A."/>
            <person name="Thode G."/>
            <person name="Daga R.R."/>
            <person name="Cruzado L."/>
            <person name="Jimenez J."/>
            <person name="Sanchez M."/>
            <person name="del Rey F."/>
            <person name="Benito J."/>
            <person name="Dominguez A."/>
            <person name="Revuelta J.L."/>
            <person name="Moreno S."/>
            <person name="Armstrong J."/>
            <person name="Forsburg S.L."/>
            <person name="Cerutti L."/>
            <person name="Lowe T."/>
            <person name="McCombie W.R."/>
            <person name="Paulsen I."/>
            <person name="Potashkin J."/>
            <person name="Shpakovski G.V."/>
            <person name="Ussery D."/>
            <person name="Barrell B.G."/>
            <person name="Nurse P."/>
        </authorList>
    </citation>
    <scope>NUCLEOTIDE SEQUENCE [LARGE SCALE GENOMIC DNA]</scope>
    <source>
        <strain>972 / ATCC 24843</strain>
    </source>
</reference>
<reference key="2">
    <citation type="journal article" date="2011" name="Science">
        <title>Comparative functional genomics of the fission yeasts.</title>
        <authorList>
            <person name="Rhind N."/>
            <person name="Chen Z."/>
            <person name="Yassour M."/>
            <person name="Thompson D.A."/>
            <person name="Haas B.J."/>
            <person name="Habib N."/>
            <person name="Wapinski I."/>
            <person name="Roy S."/>
            <person name="Lin M.F."/>
            <person name="Heiman D.I."/>
            <person name="Young S.K."/>
            <person name="Furuya K."/>
            <person name="Guo Y."/>
            <person name="Pidoux A."/>
            <person name="Chen H.M."/>
            <person name="Robbertse B."/>
            <person name="Goldberg J.M."/>
            <person name="Aoki K."/>
            <person name="Bayne E.H."/>
            <person name="Berlin A.M."/>
            <person name="Desjardins C.A."/>
            <person name="Dobbs E."/>
            <person name="Dukaj L."/>
            <person name="Fan L."/>
            <person name="FitzGerald M.G."/>
            <person name="French C."/>
            <person name="Gujja S."/>
            <person name="Hansen K."/>
            <person name="Keifenheim D."/>
            <person name="Levin J.Z."/>
            <person name="Mosher R.A."/>
            <person name="Mueller C.A."/>
            <person name="Pfiffner J."/>
            <person name="Priest M."/>
            <person name="Russ C."/>
            <person name="Smialowska A."/>
            <person name="Swoboda P."/>
            <person name="Sykes S.M."/>
            <person name="Vaughn M."/>
            <person name="Vengrova S."/>
            <person name="Yoder R."/>
            <person name="Zeng Q."/>
            <person name="Allshire R."/>
            <person name="Baulcombe D."/>
            <person name="Birren B.W."/>
            <person name="Brown W."/>
            <person name="Ekwall K."/>
            <person name="Kellis M."/>
            <person name="Leatherwood J."/>
            <person name="Levin H."/>
            <person name="Margalit H."/>
            <person name="Martienssen R."/>
            <person name="Nieduszynski C.A."/>
            <person name="Spatafora J.W."/>
            <person name="Friedman N."/>
            <person name="Dalgaard J.Z."/>
            <person name="Baumann P."/>
            <person name="Niki H."/>
            <person name="Regev A."/>
            <person name="Nusbaum C."/>
        </authorList>
    </citation>
    <scope>REVISION OF GENE MODEL</scope>
</reference>
<organism>
    <name type="scientific">Schizosaccharomyces pombe (strain 972 / ATCC 24843)</name>
    <name type="common">Fission yeast</name>
    <dbReference type="NCBI Taxonomy" id="284812"/>
    <lineage>
        <taxon>Eukaryota</taxon>
        <taxon>Fungi</taxon>
        <taxon>Dikarya</taxon>
        <taxon>Ascomycota</taxon>
        <taxon>Taphrinomycotina</taxon>
        <taxon>Schizosaccharomycetes</taxon>
        <taxon>Schizosaccharomycetales</taxon>
        <taxon>Schizosaccharomycetaceae</taxon>
        <taxon>Schizosaccharomyces</taxon>
    </lineage>
</organism>
<dbReference type="EMBL" id="CU329672">
    <property type="protein sequence ID" value="CAB51561.2"/>
    <property type="molecule type" value="Genomic_DNA"/>
</dbReference>
<dbReference type="PIR" id="T41242">
    <property type="entry name" value="T41242"/>
</dbReference>
<dbReference type="RefSeq" id="NP_588125.2">
    <property type="nucleotide sequence ID" value="NM_001023115.2"/>
</dbReference>
<dbReference type="SMR" id="Q9UUA0"/>
<dbReference type="BioGRID" id="275492">
    <property type="interactions" value="5"/>
</dbReference>
<dbReference type="STRING" id="284812.Q9UUA0"/>
<dbReference type="iPTMnet" id="Q9UUA0"/>
<dbReference type="PaxDb" id="4896-SPCC23B6.02c.1"/>
<dbReference type="EnsemblFungi" id="SPCC23B6.02c.1">
    <property type="protein sequence ID" value="SPCC23B6.02c.1:pep"/>
    <property type="gene ID" value="SPCC23B6.02c"/>
</dbReference>
<dbReference type="KEGG" id="spo:2538915"/>
<dbReference type="PomBase" id="SPCC23B6.02c"/>
<dbReference type="VEuPathDB" id="FungiDB:SPCC23B6.02c"/>
<dbReference type="HOGENOM" id="CLU_2159874_0_0_1"/>
<dbReference type="InParanoid" id="Q9UUA0"/>
<dbReference type="OMA" id="RQTKDVN"/>
<dbReference type="PRO" id="PR:Q9UUA0"/>
<dbReference type="Proteomes" id="UP000002485">
    <property type="component" value="Chromosome III"/>
</dbReference>
<dbReference type="GO" id="GO:0005737">
    <property type="term" value="C:cytoplasm"/>
    <property type="evidence" value="ECO:0007669"/>
    <property type="project" value="UniProtKB-SubCell"/>
</dbReference>
<dbReference type="GO" id="GO:0005730">
    <property type="term" value="C:nucleolus"/>
    <property type="evidence" value="ECO:0000266"/>
    <property type="project" value="PomBase"/>
</dbReference>
<dbReference type="GO" id="GO:0030687">
    <property type="term" value="C:preribosome, large subunit precursor"/>
    <property type="evidence" value="ECO:0000266"/>
    <property type="project" value="PomBase"/>
</dbReference>
<dbReference type="GO" id="GO:0000055">
    <property type="term" value="P:ribosomal large subunit export from nucleus"/>
    <property type="evidence" value="ECO:0000266"/>
    <property type="project" value="PomBase"/>
</dbReference>
<dbReference type="InterPro" id="IPR022784">
    <property type="entry name" value="Ribosome_bgen_Alb1"/>
</dbReference>
<dbReference type="Pfam" id="PF09135">
    <property type="entry name" value="Alb1"/>
    <property type="match status" value="1"/>
</dbReference>
<gene>
    <name type="ORF">SPCC23B6.02c</name>
</gene>
<sequence>MAKKQSIRSRNFRRSDPAYDLDSSTAIENETKLSVKEKVAKEIANIALRSGGSESNGISKKKKNKKQTSKKAKDKLAAALKAQAREERLDTKISKSLQKQEKLKARKQGDE</sequence>